<gene>
    <name evidence="2" type="primary">vif</name>
</gene>
<proteinExistence type="inferred from homology"/>
<organismHost>
    <name type="scientific">Homo sapiens</name>
    <name type="common">Human</name>
    <dbReference type="NCBI Taxonomy" id="9606"/>
</organismHost>
<evidence type="ECO:0000250" key="1">
    <source>
        <dbReference type="UniProtKB" id="O70897"/>
    </source>
</evidence>
<evidence type="ECO:0000255" key="2">
    <source>
        <dbReference type="HAMAP-Rule" id="MF_04081"/>
    </source>
</evidence>
<evidence type="ECO:0000256" key="3">
    <source>
        <dbReference type="SAM" id="MobiDB-lite"/>
    </source>
</evidence>
<accession>P0C1K5</accession>
<sequence length="192" mass="22688">MENRWQVMIVWQVDRMRINTWKSLVKYHMHISKKANRWYYRHHYESRHPKISSEVHIPLGDAELVVTTYWGLLTGERDWHLGQGVSIEWRLKRYRTQVEPDLADQLIHIYYFDCFSESAVRKAILGHRVSPRCECQAGHNKVGSLQYLALTALVAPRRPKPPVPSVKKLVEDRWNKPQKTRGHRGSQTMNGH</sequence>
<protein>
    <recommendedName>
        <fullName evidence="2">Virion infectivity factor</fullName>
        <shortName evidence="2">Vif</shortName>
    </recommendedName>
    <alternativeName>
        <fullName evidence="2">SOR protein</fullName>
    </alternativeName>
    <component>
        <recommendedName>
            <fullName evidence="2">p17</fullName>
        </recommendedName>
    </component>
    <component>
        <recommendedName>
            <fullName evidence="2">p7</fullName>
        </recommendedName>
    </component>
</protein>
<dbReference type="EMBL" id="AJ249239">
    <property type="status" value="NOT_ANNOTATED_CDS"/>
    <property type="molecule type" value="Genomic_RNA"/>
</dbReference>
<dbReference type="SMR" id="P0C1K5"/>
<dbReference type="Proteomes" id="UP000101651">
    <property type="component" value="Segment"/>
</dbReference>
<dbReference type="GO" id="GO:0030430">
    <property type="term" value="C:host cell cytoplasm"/>
    <property type="evidence" value="ECO:0007669"/>
    <property type="project" value="UniProtKB-SubCell"/>
</dbReference>
<dbReference type="GO" id="GO:0020002">
    <property type="term" value="C:host cell plasma membrane"/>
    <property type="evidence" value="ECO:0007669"/>
    <property type="project" value="UniProtKB-SubCell"/>
</dbReference>
<dbReference type="GO" id="GO:0016020">
    <property type="term" value="C:membrane"/>
    <property type="evidence" value="ECO:0007669"/>
    <property type="project" value="UniProtKB-UniRule"/>
</dbReference>
<dbReference type="GO" id="GO:0044423">
    <property type="term" value="C:virion component"/>
    <property type="evidence" value="ECO:0007669"/>
    <property type="project" value="UniProtKB-UniRule"/>
</dbReference>
<dbReference type="GO" id="GO:0046872">
    <property type="term" value="F:metal ion binding"/>
    <property type="evidence" value="ECO:0007669"/>
    <property type="project" value="UniProtKB-KW"/>
</dbReference>
<dbReference type="GO" id="GO:0003723">
    <property type="term" value="F:RNA binding"/>
    <property type="evidence" value="ECO:0007669"/>
    <property type="project" value="UniProtKB-UniRule"/>
</dbReference>
<dbReference type="GO" id="GO:0019058">
    <property type="term" value="P:viral life cycle"/>
    <property type="evidence" value="ECO:0007669"/>
    <property type="project" value="InterPro"/>
</dbReference>
<dbReference type="HAMAP" id="MF_04081">
    <property type="entry name" value="HIV_VIF"/>
    <property type="match status" value="1"/>
</dbReference>
<dbReference type="InterPro" id="IPR000475">
    <property type="entry name" value="Vif"/>
</dbReference>
<dbReference type="Pfam" id="PF00559">
    <property type="entry name" value="Vif"/>
    <property type="match status" value="1"/>
</dbReference>
<dbReference type="PRINTS" id="PR00349">
    <property type="entry name" value="VIRIONINFFCT"/>
</dbReference>
<comment type="function">
    <text evidence="2">Counteracts the innate antiviral activity of host APOBEC3F and APOBEC3G by promoting their ubiquitination and degradation. Acts as a substrate recognition component of an E3 ubiquitin-protein ligase complex: mechanistically, Vif hijacks a host cullin-5-RING E3 ubiquitin-protein ligase complex (ECS complex) and the transcription coactivator CBFB/CBF-beta to form an active E3 ubiquitin-protein ligase complex that targets APOBEC3G and APOBEC3F for polyubiquitination, leading to their degradation by the proteasome. Vif interaction with APOBEC3G also blocks its cytidine deaminase activity in a proteasome-independent manner, suggesting a dual inhibitory mechanism. May interact directly with APOBEC3G mRNA in order to inhibit its translation. Association with CBFB/CBF-beta also inhibits the transcription coactivator activity of CBFB/CBF-beta. Seems to play a role in viral morphology by affecting the stability of the viral nucleoprotein core. Finally, Vif also contributes to the G2 cell cycle arrest observed in HIV infected cells.</text>
</comment>
<comment type="subunit">
    <text evidence="1">Homomultimer; in vitro and presumably in vivo. Interacts with viral RNA and Pr55Gag precursor; these interactions mediate Vif incorporation into the virion. Interacts with the viral reverse transcriptase. Forms cullin-5-RING E3 ubiquitin-protein ligase complex (ECS complex) by interacting with host CUL5, RBX2, elongin BC complex (ELOB and ELOC) and CBFB/CBF-beta. Within the ECS complex, Vif interacts directly with host CUL5, ELOC and APOBEC (APOBEC3F and APOBEC3G) substrates. The ECS complex also contains some single-stranded RNA (ssRNA) that acts as a glue that bridges Vif with APOBEC (APOBEC3F and APOBEC3G) substrates. Interacts with host UBCE7IP1 isoform 3/ZIN and possibly with SAT. Interacts with host tyrosine kinases HCK and FYN; these interactions may decrease level of phosphorylated APOBEC3G incorporation into virions. Interacts with host ABCE1; this interaction may play a role in protecting viral RNA from damage during viral assembly. Interacts with host MDM2; this interaction targets Vif for degradation by the proteasome.</text>
</comment>
<comment type="subcellular location">
    <subcellularLocation>
        <location evidence="2">Host cytoplasm</location>
    </subcellularLocation>
    <subcellularLocation>
        <location evidence="2">Host cell membrane</location>
        <topology evidence="2">Peripheral membrane protein</topology>
        <orientation evidence="2">Cytoplasmic side</orientation>
    </subcellularLocation>
    <subcellularLocation>
        <location evidence="2">Virion</location>
    </subcellularLocation>
    <text evidence="2">In the cytoplasm, seems to colocalize with intermediate filament vimentin. A fraction is associated with the cytoplasmic side of cellular membranes, presumably via the interaction with Pr55Gag precursor. Incorporated in virions at a ratio of approximately 7 to 20 molecules per virion.</text>
</comment>
<comment type="induction">
    <text evidence="2">Expressed late during infection in a Rev-dependent manner.</text>
</comment>
<comment type="domain">
    <text evidence="2">The BC-like-box motif mediates the interaction with elongin BC complex.</text>
</comment>
<comment type="domain">
    <text evidence="2">The HCCH motif (H-x(5)-C-x(18)-C-x(5)-H) mediates the interaction with CUL5.</text>
</comment>
<comment type="PTM">
    <text evidence="2">Processed in virion by the viral protease.</text>
</comment>
<comment type="PTM">
    <text evidence="2">Highly phosphorylated on serine and threonine residues.</text>
</comment>
<comment type="PTM">
    <text evidence="2">Polyubiquitinated and degraded by the proteasome in the presence of APOBEC3G.</text>
</comment>
<comment type="miscellaneous">
    <text evidence="2">Vif-defective viruses show catastrophic failure in reverse transcription due to APOBEC-induced mutations that initiate a DNA base repair pathway and compromise the structural integrity of the ssDNA. In the absence of Vif, the virion is morphologically abnormal.</text>
</comment>
<comment type="miscellaneous">
    <text evidence="2">HIV-1 lineages are divided in three main groups, M (for Major), O (for Outlier), and N (for New, or Non-M, Non-O). The vast majority of strains found worldwide belong to the group M. Group O seems to be endemic to and largely confined to Cameroon and neighboring countries in West Central Africa, where these viruses represent a small minority of HIV-1 strains. The group N is represented by a limited number of isolates from Cameroonian persons. The group M is further subdivided in 9 clades or subtypes (A to D, F to H, J and K).</text>
</comment>
<comment type="miscellaneous">
    <text evidence="2">Required for replication in 'nonpermissive' cells, including primary T-cells, macrophages and certain T-cell lines, but is dispensable for replication in 'permissive' cell lines, such as 293T cells. In nonpermissive cells, Vif-defective viruses can produce virions, but they fail to complete reverse transcription and cannot successfully infect new cells.</text>
</comment>
<comment type="similarity">
    <text evidence="2">Belongs to the primate lentivirus group Vif protein family.</text>
</comment>
<reference key="1">
    <citation type="journal article" date="2000" name="AIDS Res. Hum. Retroviruses">
        <title>Near-full-length genome sequencing of divergent African HIV type 1 subtype F viruses leads to the identification of a new HIV type 1 subtype designated K.</title>
        <authorList>
            <person name="Triques K."/>
            <person name="Bourgeois A."/>
            <person name="Vidale N."/>
            <person name="Mpoudi-Ngole E."/>
            <person name="Mulanga-Kabeya C."/>
            <person name="Nzilambi N."/>
            <person name="Torimiro N."/>
            <person name="Saman E."/>
            <person name="Delaporte E."/>
            <person name="Peeters M."/>
        </authorList>
    </citation>
    <scope>NUCLEOTIDE SEQUENCE [GENOMIC RNA]</scope>
</reference>
<name>VIF_HV196</name>
<keyword id="KW-0014">AIDS</keyword>
<keyword id="KW-1032">Host cell membrane</keyword>
<keyword id="KW-1035">Host cytoplasm</keyword>
<keyword id="KW-1043">Host membrane</keyword>
<keyword id="KW-0945">Host-virus interaction</keyword>
<keyword id="KW-0472">Membrane</keyword>
<keyword id="KW-0479">Metal-binding</keyword>
<keyword id="KW-0597">Phosphoprotein</keyword>
<keyword id="KW-0694">RNA-binding</keyword>
<keyword id="KW-0832">Ubl conjugation</keyword>
<keyword id="KW-0833">Ubl conjugation pathway</keyword>
<keyword id="KW-0946">Virion</keyword>
<keyword id="KW-0862">Zinc</keyword>
<organism>
    <name type="scientific">Human immunodeficiency virus type 1 group M subtype K (isolate 96CM-MP535)</name>
    <name type="common">HIV-1</name>
    <dbReference type="NCBI Taxonomy" id="388906"/>
    <lineage>
        <taxon>Viruses</taxon>
        <taxon>Riboviria</taxon>
        <taxon>Pararnavirae</taxon>
        <taxon>Artverviricota</taxon>
        <taxon>Revtraviricetes</taxon>
        <taxon>Ortervirales</taxon>
        <taxon>Retroviridae</taxon>
        <taxon>Orthoretrovirinae</taxon>
        <taxon>Lentivirus</taxon>
        <taxon>Human immunodeficiency virus type 1</taxon>
    </lineage>
</organism>
<feature type="chain" id="PRO_0000245114" description="Virion infectivity factor" evidence="2">
    <location>
        <begin position="1"/>
        <end position="192"/>
    </location>
</feature>
<feature type="chain" id="PRO_0000245115" description="p17" evidence="2">
    <location>
        <begin position="1"/>
        <end position="150"/>
    </location>
</feature>
<feature type="chain" id="PRO_0000245116" description="p7" evidence="2">
    <location>
        <begin position="151"/>
        <end position="192"/>
    </location>
</feature>
<feature type="region of interest" description="Interaction with host APOBEC3F; F1-box" evidence="2">
    <location>
        <begin position="14"/>
        <end position="17"/>
    </location>
</feature>
<feature type="region of interest" description="Interaction with host APOBEC3G; G-box" evidence="2">
    <location>
        <begin position="40"/>
        <end position="44"/>
    </location>
</feature>
<feature type="region of interest" description="Interaction with host APOBEC3F and APOBEC3G; FG-box" evidence="2">
    <location>
        <begin position="54"/>
        <end position="72"/>
    </location>
</feature>
<feature type="region of interest" description="Interaction with host APOBEC3F; F2-box" evidence="2">
    <location>
        <begin position="74"/>
        <end position="79"/>
    </location>
</feature>
<feature type="region of interest" description="RNA-binding" evidence="2">
    <location>
        <begin position="75"/>
        <end position="114"/>
    </location>
</feature>
<feature type="region of interest" description="SOCS box-like" evidence="2">
    <location>
        <begin position="151"/>
        <end position="180"/>
    </location>
</feature>
<feature type="region of interest" description="Multimerization" evidence="2">
    <location>
        <begin position="151"/>
        <end position="164"/>
    </location>
</feature>
<feature type="region of interest" description="Disordered" evidence="3">
    <location>
        <begin position="159"/>
        <end position="192"/>
    </location>
</feature>
<feature type="region of interest" description="Membrane association" evidence="2">
    <location>
        <begin position="171"/>
        <end position="172"/>
    </location>
</feature>
<feature type="short sequence motif" description="HCCH motif" evidence="2">
    <location>
        <begin position="108"/>
        <end position="139"/>
    </location>
</feature>
<feature type="short sequence motif" description="BC-box-like motif" evidence="2">
    <location>
        <begin position="144"/>
        <end position="153"/>
    </location>
</feature>
<feature type="binding site" evidence="2">
    <location>
        <position position="108"/>
    </location>
    <ligand>
        <name>Zn(2+)</name>
        <dbReference type="ChEBI" id="CHEBI:29105"/>
    </ligand>
</feature>
<feature type="binding site" evidence="2">
    <location>
        <position position="114"/>
    </location>
    <ligand>
        <name>Zn(2+)</name>
        <dbReference type="ChEBI" id="CHEBI:29105"/>
    </ligand>
</feature>
<feature type="binding site" evidence="2">
    <location>
        <position position="133"/>
    </location>
    <ligand>
        <name>Zn(2+)</name>
        <dbReference type="ChEBI" id="CHEBI:29105"/>
    </ligand>
</feature>
<feature type="binding site" evidence="2">
    <location>
        <position position="139"/>
    </location>
    <ligand>
        <name>Zn(2+)</name>
        <dbReference type="ChEBI" id="CHEBI:29105"/>
    </ligand>
</feature>
<feature type="site" description="Cleavage in virion (by viral protease)" evidence="2">
    <location>
        <begin position="150"/>
        <end position="151"/>
    </location>
</feature>
<feature type="modified residue" description="Phosphothreonine; by host MAP4K1" evidence="2">
    <location>
        <position position="96"/>
    </location>
</feature>
<feature type="modified residue" description="Phosphoserine; by host" evidence="2">
    <location>
        <position position="144"/>
    </location>
</feature>
<feature type="modified residue" description="Phosphoserine; by host MAP4K1" evidence="2">
    <location>
        <position position="165"/>
    </location>
</feature>
<feature type="modified residue" description="Phosphothreonine; by host" evidence="2">
    <location>
        <position position="188"/>
    </location>
</feature>